<name>CTAA_BRUO2</name>
<comment type="function">
    <text evidence="1">Catalyzes the conversion of heme O to heme A by two successive hydroxylations of the methyl group at C8. The first hydroxylation forms heme I, the second hydroxylation results in an unstable dihydroxymethyl group, which spontaneously dehydrates, resulting in the formyl group of heme A.</text>
</comment>
<comment type="catalytic activity">
    <reaction evidence="1">
        <text>Fe(II)-heme o + 2 A + H2O = Fe(II)-heme a + 2 AH2</text>
        <dbReference type="Rhea" id="RHEA:63388"/>
        <dbReference type="ChEBI" id="CHEBI:13193"/>
        <dbReference type="ChEBI" id="CHEBI:15377"/>
        <dbReference type="ChEBI" id="CHEBI:17499"/>
        <dbReference type="ChEBI" id="CHEBI:60530"/>
        <dbReference type="ChEBI" id="CHEBI:61715"/>
        <dbReference type="EC" id="1.17.99.9"/>
    </reaction>
    <physiologicalReaction direction="left-to-right" evidence="1">
        <dbReference type="Rhea" id="RHEA:63389"/>
    </physiologicalReaction>
</comment>
<comment type="cofactor">
    <cofactor evidence="1">
        <name>heme b</name>
        <dbReference type="ChEBI" id="CHEBI:60344"/>
    </cofactor>
</comment>
<comment type="pathway">
    <text evidence="1">Porphyrin-containing compound metabolism; heme A biosynthesis; heme A from heme O: step 1/1.</text>
</comment>
<comment type="subunit">
    <text evidence="1">Interacts with CtaB.</text>
</comment>
<comment type="subcellular location">
    <subcellularLocation>
        <location evidence="1">Cell membrane</location>
        <topology evidence="1">Multi-pass membrane protein</topology>
    </subcellularLocation>
</comment>
<comment type="similarity">
    <text evidence="1">Belongs to the COX15/CtaA family. Type 2 subfamily.</text>
</comment>
<comment type="sequence caution" evidence="2">
    <conflict type="erroneous initiation">
        <sequence resource="EMBL-CDS" id="ABQ60956"/>
    </conflict>
</comment>
<reference key="1">
    <citation type="journal article" date="2009" name="PLoS ONE">
        <title>Genome degradation in Brucella ovis corresponds with narrowing of its host range and tissue tropism.</title>
        <authorList>
            <person name="Tsolis R.M."/>
            <person name="Seshadri R."/>
            <person name="Santos R.L."/>
            <person name="Sangari F.J."/>
            <person name="Lobo J.M."/>
            <person name="de Jong M.F."/>
            <person name="Ren Q."/>
            <person name="Myers G."/>
            <person name="Brinkac L.M."/>
            <person name="Nelson W.C."/>
            <person name="Deboy R.T."/>
            <person name="Angiuoli S."/>
            <person name="Khouri H."/>
            <person name="Dimitrov G."/>
            <person name="Robinson J.R."/>
            <person name="Mulligan S."/>
            <person name="Walker R.L."/>
            <person name="Elzer P.E."/>
            <person name="Hassan K.A."/>
            <person name="Paulsen I.T."/>
        </authorList>
    </citation>
    <scope>NUCLEOTIDE SEQUENCE [LARGE SCALE GENOMIC DNA]</scope>
    <source>
        <strain>ATCC 25840 / 63/290 / NCTC 10512</strain>
    </source>
</reference>
<sequence>MAATSAQHIGLQGHGTSRNDRDRRLVRYWLYAVFAVLIAIVMVGGATRMTGSGLSITEWKPIHGVIPPLNHAEWVEEFEKYQQIPQYQQINKGMSLAEFQYIFWWEWAHRLLARFVGFLVAVPLGFFWLTGRLKGGLKYRMLGLLALGGLQGAIGWWMVASGLSELTSVSQYRLAIHLTTACVIITAVFYIARGLVTYSERPAERSIQRFAGWIVFAVLVQIYLGGLVAGLHAGLTYNTWPLMDGAIIPSDLFTQAPWWRNLFENPKTVQFVHRMFAYTVLLLAILHAVQVWKNAPGTTHARRTIVLVGLVFIQAMIGIATLLMSAPLHLGLTHQFFALVVLAFAVAHWRATKGAYAA</sequence>
<evidence type="ECO:0000255" key="1">
    <source>
        <dbReference type="HAMAP-Rule" id="MF_01665"/>
    </source>
</evidence>
<evidence type="ECO:0000305" key="2"/>
<dbReference type="EC" id="1.17.99.9" evidence="1"/>
<dbReference type="EMBL" id="CP000708">
    <property type="protein sequence ID" value="ABQ60956.1"/>
    <property type="status" value="ALT_INIT"/>
    <property type="molecule type" value="Genomic_DNA"/>
</dbReference>
<dbReference type="RefSeq" id="WP_002969419.1">
    <property type="nucleotide sequence ID" value="NC_009505.1"/>
</dbReference>
<dbReference type="SMR" id="A5VPX0"/>
<dbReference type="KEGG" id="bov:BOV_0782"/>
<dbReference type="HOGENOM" id="CLU_017627_0_0_5"/>
<dbReference type="PhylomeDB" id="A5VPX0"/>
<dbReference type="UniPathway" id="UPA00269">
    <property type="reaction ID" value="UER00713"/>
</dbReference>
<dbReference type="Proteomes" id="UP000006383">
    <property type="component" value="Chromosome I"/>
</dbReference>
<dbReference type="GO" id="GO:0005886">
    <property type="term" value="C:plasma membrane"/>
    <property type="evidence" value="ECO:0007669"/>
    <property type="project" value="UniProtKB-SubCell"/>
</dbReference>
<dbReference type="GO" id="GO:0046872">
    <property type="term" value="F:metal ion binding"/>
    <property type="evidence" value="ECO:0007669"/>
    <property type="project" value="UniProtKB-KW"/>
</dbReference>
<dbReference type="GO" id="GO:0016653">
    <property type="term" value="F:oxidoreductase activity, acting on NAD(P)H, heme protein as acceptor"/>
    <property type="evidence" value="ECO:0007669"/>
    <property type="project" value="InterPro"/>
</dbReference>
<dbReference type="GO" id="GO:0006784">
    <property type="term" value="P:heme A biosynthetic process"/>
    <property type="evidence" value="ECO:0007669"/>
    <property type="project" value="UniProtKB-UniRule"/>
</dbReference>
<dbReference type="HAMAP" id="MF_01665">
    <property type="entry name" value="HemeA_synth_type2"/>
    <property type="match status" value="1"/>
</dbReference>
<dbReference type="InterPro" id="IPR003780">
    <property type="entry name" value="COX15/CtaA_fam"/>
</dbReference>
<dbReference type="InterPro" id="IPR023754">
    <property type="entry name" value="HemeA_Synthase_type2"/>
</dbReference>
<dbReference type="PANTHER" id="PTHR23289">
    <property type="entry name" value="CYTOCHROME C OXIDASE ASSEMBLY PROTEIN COX15"/>
    <property type="match status" value="1"/>
</dbReference>
<dbReference type="PANTHER" id="PTHR23289:SF2">
    <property type="entry name" value="CYTOCHROME C OXIDASE ASSEMBLY PROTEIN COX15 HOMOLOG"/>
    <property type="match status" value="1"/>
</dbReference>
<dbReference type="Pfam" id="PF02628">
    <property type="entry name" value="COX15-CtaA"/>
    <property type="match status" value="1"/>
</dbReference>
<keyword id="KW-1003">Cell membrane</keyword>
<keyword id="KW-0350">Heme biosynthesis</keyword>
<keyword id="KW-0408">Iron</keyword>
<keyword id="KW-0472">Membrane</keyword>
<keyword id="KW-0479">Metal-binding</keyword>
<keyword id="KW-0560">Oxidoreductase</keyword>
<keyword id="KW-0812">Transmembrane</keyword>
<keyword id="KW-1133">Transmembrane helix</keyword>
<proteinExistence type="inferred from homology"/>
<gene>
    <name evidence="1" type="primary">ctaA</name>
    <name type="ordered locus">BOV_0782</name>
</gene>
<protein>
    <recommendedName>
        <fullName evidence="1">Heme A synthase</fullName>
        <shortName evidence="1">HAS</shortName>
        <ecNumber evidence="1">1.17.99.9</ecNumber>
    </recommendedName>
    <alternativeName>
        <fullName evidence="1">Cytochrome aa3-controlling protein</fullName>
    </alternativeName>
</protein>
<organism>
    <name type="scientific">Brucella ovis (strain ATCC 25840 / 63/290 / NCTC 10512)</name>
    <dbReference type="NCBI Taxonomy" id="444178"/>
    <lineage>
        <taxon>Bacteria</taxon>
        <taxon>Pseudomonadati</taxon>
        <taxon>Pseudomonadota</taxon>
        <taxon>Alphaproteobacteria</taxon>
        <taxon>Hyphomicrobiales</taxon>
        <taxon>Brucellaceae</taxon>
        <taxon>Brucella/Ochrobactrum group</taxon>
        <taxon>Brucella</taxon>
    </lineage>
</organism>
<accession>A5VPX0</accession>
<feature type="chain" id="PRO_0000349024" description="Heme A synthase">
    <location>
        <begin position="1"/>
        <end position="358"/>
    </location>
</feature>
<feature type="transmembrane region" description="Helical" evidence="1">
    <location>
        <begin position="25"/>
        <end position="45"/>
    </location>
</feature>
<feature type="transmembrane region" description="Helical" evidence="1">
    <location>
        <begin position="111"/>
        <end position="131"/>
    </location>
</feature>
<feature type="transmembrane region" description="Helical" evidence="1">
    <location>
        <begin position="141"/>
        <end position="161"/>
    </location>
</feature>
<feature type="transmembrane region" description="Helical" evidence="1">
    <location>
        <begin position="176"/>
        <end position="196"/>
    </location>
</feature>
<feature type="transmembrane region" description="Helical" evidence="1">
    <location>
        <begin position="210"/>
        <end position="230"/>
    </location>
</feature>
<feature type="transmembrane region" description="Helical" evidence="1">
    <location>
        <begin position="269"/>
        <end position="289"/>
    </location>
</feature>
<feature type="transmembrane region" description="Helical" evidence="1">
    <location>
        <begin position="304"/>
        <end position="324"/>
    </location>
</feature>
<feature type="transmembrane region" description="Helical" evidence="1">
    <location>
        <begin position="326"/>
        <end position="346"/>
    </location>
</feature>
<feature type="binding site" description="axial binding residue" evidence="1">
    <location>
        <position position="273"/>
    </location>
    <ligand>
        <name>heme</name>
        <dbReference type="ChEBI" id="CHEBI:30413"/>
    </ligand>
    <ligandPart>
        <name>Fe</name>
        <dbReference type="ChEBI" id="CHEBI:18248"/>
    </ligandPart>
</feature>
<feature type="binding site" description="axial binding residue" evidence="1">
    <location>
        <position position="334"/>
    </location>
    <ligand>
        <name>heme</name>
        <dbReference type="ChEBI" id="CHEBI:30413"/>
    </ligand>
    <ligandPart>
        <name>Fe</name>
        <dbReference type="ChEBI" id="CHEBI:18248"/>
    </ligandPart>
</feature>